<reference key="1">
    <citation type="journal article" date="2000" name="Nucleic Acids Res.">
        <title>Genome sequences of Chlamydia trachomatis MoPn and Chlamydia pneumoniae AR39.</title>
        <authorList>
            <person name="Read T.D."/>
            <person name="Brunham R.C."/>
            <person name="Shen C."/>
            <person name="Gill S.R."/>
            <person name="Heidelberg J.F."/>
            <person name="White O."/>
            <person name="Hickey E.K."/>
            <person name="Peterson J.D."/>
            <person name="Utterback T.R."/>
            <person name="Berry K.J."/>
            <person name="Bass S."/>
            <person name="Linher K.D."/>
            <person name="Weidman J.F."/>
            <person name="Khouri H.M."/>
            <person name="Craven B."/>
            <person name="Bowman C."/>
            <person name="Dodson R.J."/>
            <person name="Gwinn M.L."/>
            <person name="Nelson W.C."/>
            <person name="DeBoy R.T."/>
            <person name="Kolonay J.F."/>
            <person name="McClarty G."/>
            <person name="Salzberg S.L."/>
            <person name="Eisen J.A."/>
            <person name="Fraser C.M."/>
        </authorList>
    </citation>
    <scope>NUCLEOTIDE SEQUENCE [LARGE SCALE GENOMIC DNA]</scope>
    <source>
        <strain>MoPn / Nigg</strain>
    </source>
</reference>
<protein>
    <recommendedName>
        <fullName>Uncharacterized protein TC_0475</fullName>
    </recommendedName>
</protein>
<dbReference type="EMBL" id="AE002160">
    <property type="protein sequence ID" value="AAF39322.1"/>
    <property type="status" value="ALT_INIT"/>
    <property type="molecule type" value="Genomic_DNA"/>
</dbReference>
<dbReference type="PIR" id="B81698">
    <property type="entry name" value="B81698"/>
</dbReference>
<dbReference type="SMR" id="Q9PKJ0"/>
<dbReference type="KEGG" id="cmu:TC_0475"/>
<dbReference type="eggNOG" id="COG3012">
    <property type="taxonomic scope" value="Bacteria"/>
</dbReference>
<dbReference type="HOGENOM" id="CLU_075496_0_0_0"/>
<dbReference type="OrthoDB" id="18359at2"/>
<dbReference type="Proteomes" id="UP000000800">
    <property type="component" value="Chromosome"/>
</dbReference>
<dbReference type="InterPro" id="IPR010602">
    <property type="entry name" value="DUF1186"/>
</dbReference>
<dbReference type="Pfam" id="PF06685">
    <property type="entry name" value="DUF1186"/>
    <property type="match status" value="1"/>
</dbReference>
<gene>
    <name type="ordered locus">TC_0475</name>
</gene>
<name>Y475_CHLMU</name>
<comment type="similarity">
    <text evidence="1">Belongs to the chlamydial CPn_0206/CT203/TC_0475 family.</text>
</comment>
<comment type="sequence caution" evidence="1">
    <conflict type="erroneous initiation">
        <sequence resource="EMBL-CDS" id="AAF39322"/>
    </conflict>
</comment>
<proteinExistence type="inferred from homology"/>
<evidence type="ECO:0000305" key="1"/>
<sequence>MEISHILEDLVYDNGVLPREAIEAAIVKHNQITPYLLKILEEAIDHVSDIIDDDCYQGHLYAMYLLAQFRETRALPLIIKLFSFEQDIPHAIAGDVLTEDLSRILASVCDDVSLIQELIETPRVNPYVQAAAISSLVSLVGVKKLSRGAAIRYFGELLNYRLEKRPSFAWDSLVASICALYPKELFYPISKAFSAGLIDKSFISMEDVETIIHEESIDSCLQEVFSSTDLIDDTLEEMEKWLERFPFES</sequence>
<feature type="chain" id="PRO_0000218369" description="Uncharacterized protein TC_0475">
    <location>
        <begin position="1"/>
        <end position="249"/>
    </location>
</feature>
<organism>
    <name type="scientific">Chlamydia muridarum (strain MoPn / Nigg)</name>
    <dbReference type="NCBI Taxonomy" id="243161"/>
    <lineage>
        <taxon>Bacteria</taxon>
        <taxon>Pseudomonadati</taxon>
        <taxon>Chlamydiota</taxon>
        <taxon>Chlamydiia</taxon>
        <taxon>Chlamydiales</taxon>
        <taxon>Chlamydiaceae</taxon>
        <taxon>Chlamydia/Chlamydophila group</taxon>
        <taxon>Chlamydia</taxon>
    </lineage>
</organism>
<accession>Q9PKJ0</accession>